<protein>
    <recommendedName>
        <fullName>Matrix Gla protein</fullName>
        <shortName>MGP</shortName>
    </recommendedName>
</protein>
<reference key="1">
    <citation type="journal article" date="1994" name="J. Bone Miner. Res.">
        <title>Isolation and sequence of the vitamin K-dependent matrix Gla protein from the calcified cartilage of the soupfin shark.</title>
        <authorList>
            <person name="Rice J.S."/>
            <person name="Williamson M.K."/>
            <person name="Price P.A."/>
        </authorList>
    </citation>
    <scope>PROTEIN SEQUENCE</scope>
    <scope>GAMMA-CARBOXYGLUTAMATION AT GLU-43; GLU-47; GLU-50 AND GLU-51</scope>
    <source>
        <tissue>Cartilage</tissue>
    </source>
</reference>
<reference key="2">
    <citation type="journal article" date="1994" name="Protein Sci.">
        <title>Conserved phosphorylation of serines in the Ser-X-Glu/Ser(P) sequences of the vitamin K-dependent matrix Gla protein from shark, lamb, rat, cow, and human.</title>
        <authorList>
            <person name="Price P.A."/>
            <person name="Rice J.S."/>
            <person name="Williamson M.K."/>
        </authorList>
    </citation>
    <scope>PHOSPHORYLATION AT SER-2; SER-3 AND SER-5</scope>
</reference>
<evidence type="ECO:0000255" key="1">
    <source>
        <dbReference type="PROSITE-ProRule" id="PRU00463"/>
    </source>
</evidence>
<evidence type="ECO:0000256" key="2">
    <source>
        <dbReference type="SAM" id="MobiDB-lite"/>
    </source>
</evidence>
<evidence type="ECO:0000269" key="3">
    <source>
    </source>
</evidence>
<evidence type="ECO:0000269" key="4">
    <source>
    </source>
</evidence>
<evidence type="ECO:0000305" key="5"/>
<organism>
    <name type="scientific">Galeorhinus galeus</name>
    <name type="common">Tope shark</name>
    <name type="synonym">Galeorhinus australis</name>
    <dbReference type="NCBI Taxonomy" id="86063"/>
    <lineage>
        <taxon>Eukaryota</taxon>
        <taxon>Metazoa</taxon>
        <taxon>Chordata</taxon>
        <taxon>Craniata</taxon>
        <taxon>Vertebrata</taxon>
        <taxon>Chondrichthyes</taxon>
        <taxon>Elasmobranchii</taxon>
        <taxon>Galeomorphii</taxon>
        <taxon>Galeoidea</taxon>
        <taxon>Carcharhiniformes</taxon>
        <taxon>Triakidae</taxon>
        <taxon>Galeorhinus</taxon>
    </lineage>
</organism>
<gene>
    <name type="primary">mgp</name>
</gene>
<keyword id="KW-0891">Chondrogenesis</keyword>
<keyword id="KW-0217">Developmental protein</keyword>
<keyword id="KW-0221">Differentiation</keyword>
<keyword id="KW-0903">Direct protein sequencing</keyword>
<keyword id="KW-1015">Disulfide bond</keyword>
<keyword id="KW-0301">Gamma-carboxyglutamic acid</keyword>
<keyword id="KW-0892">Osteogenesis</keyword>
<keyword id="KW-0597">Phosphoprotein</keyword>
<keyword id="KW-0964">Secreted</keyword>
<name>MGP_GALGA</name>
<proteinExistence type="evidence at protein level"/>
<comment type="function">
    <text>Associates with the organic matrix of calcified cartilage.</text>
</comment>
<comment type="subcellular location">
    <subcellularLocation>
        <location>Secreted</location>
    </subcellularLocation>
</comment>
<comment type="tissue specificity">
    <text>Accounts for 35-40% of the total protein in the acid demineralization extract of calcified cartilage.</text>
</comment>
<comment type="PTM">
    <text>Requires vitamin K-dependent gamma-carboxylation for its function.</text>
</comment>
<comment type="similarity">
    <text evidence="5">Belongs to the osteocalcin/matrix Gla protein family.</text>
</comment>
<dbReference type="SMR" id="P56620"/>
<dbReference type="iPTMnet" id="P56620"/>
<dbReference type="GO" id="GO:0031012">
    <property type="term" value="C:extracellular matrix"/>
    <property type="evidence" value="ECO:0007669"/>
    <property type="project" value="InterPro"/>
</dbReference>
<dbReference type="GO" id="GO:0005576">
    <property type="term" value="C:extracellular region"/>
    <property type="evidence" value="ECO:0007669"/>
    <property type="project" value="UniProtKB-SubCell"/>
</dbReference>
<dbReference type="GO" id="GO:0005509">
    <property type="term" value="F:calcium ion binding"/>
    <property type="evidence" value="ECO:0007669"/>
    <property type="project" value="InterPro"/>
</dbReference>
<dbReference type="GO" id="GO:0051216">
    <property type="term" value="P:cartilage development"/>
    <property type="evidence" value="ECO:0007669"/>
    <property type="project" value="UniProtKB-KW"/>
</dbReference>
<dbReference type="GO" id="GO:0030154">
    <property type="term" value="P:cell differentiation"/>
    <property type="evidence" value="ECO:0007669"/>
    <property type="project" value="UniProtKB-KW"/>
</dbReference>
<dbReference type="GO" id="GO:0001503">
    <property type="term" value="P:ossification"/>
    <property type="evidence" value="ECO:0007669"/>
    <property type="project" value="UniProtKB-KW"/>
</dbReference>
<dbReference type="InterPro" id="IPR035972">
    <property type="entry name" value="GLA-like_dom_SF"/>
</dbReference>
<dbReference type="InterPro" id="IPR000294">
    <property type="entry name" value="GLA_domain"/>
</dbReference>
<dbReference type="InterPro" id="IPR027118">
    <property type="entry name" value="MGP"/>
</dbReference>
<dbReference type="PANTHER" id="PTHR10109">
    <property type="entry name" value="MATRIX GLA PROTEIN"/>
    <property type="match status" value="1"/>
</dbReference>
<dbReference type="PANTHER" id="PTHR10109:SF0">
    <property type="entry name" value="MATRIX GLA PROTEIN"/>
    <property type="match status" value="1"/>
</dbReference>
<dbReference type="SMART" id="SM00069">
    <property type="entry name" value="GLA"/>
    <property type="match status" value="1"/>
</dbReference>
<dbReference type="SUPFAM" id="SSF57630">
    <property type="entry name" value="GLA-domain"/>
    <property type="match status" value="1"/>
</dbReference>
<dbReference type="PROSITE" id="PS00011">
    <property type="entry name" value="GLA_1"/>
    <property type="match status" value="1"/>
</dbReference>
<dbReference type="PROSITE" id="PS50998">
    <property type="entry name" value="GLA_2"/>
    <property type="match status" value="1"/>
</dbReference>
<accession>P56620</accession>
<sequence length="102" mass="12565">DSSESNEIEDVLFLGRQDANSFMRQPRPPNHWDSRDRFKSPRERTREKCEEYRPCERLARQVGLKRAYGKYFGNRRQRPSTSGRLRPRKYRASRYRNHHYRY</sequence>
<feature type="chain" id="PRO_0000148912" description="Matrix Gla protein">
    <location>
        <begin position="1"/>
        <end position="102"/>
    </location>
</feature>
<feature type="domain" description="Gla" evidence="1">
    <location>
        <begin position="27"/>
        <end position="73"/>
    </location>
</feature>
<feature type="region of interest" description="Disordered" evidence="2">
    <location>
        <begin position="18"/>
        <end position="45"/>
    </location>
</feature>
<feature type="region of interest" description="Disordered" evidence="2">
    <location>
        <begin position="72"/>
        <end position="102"/>
    </location>
</feature>
<feature type="compositionally biased region" description="Basic and acidic residues" evidence="2">
    <location>
        <begin position="30"/>
        <end position="45"/>
    </location>
</feature>
<feature type="compositionally biased region" description="Basic residues" evidence="2">
    <location>
        <begin position="85"/>
        <end position="102"/>
    </location>
</feature>
<feature type="modified residue" description="Phosphoserine" evidence="4">
    <location>
        <position position="2"/>
    </location>
</feature>
<feature type="modified residue" description="Phosphoserine" evidence="4">
    <location>
        <position position="3"/>
    </location>
</feature>
<feature type="modified residue" description="Phosphoserine" evidence="4">
    <location>
        <position position="5"/>
    </location>
</feature>
<feature type="modified residue" description="4-carboxyglutamate" evidence="1 3">
    <location>
        <position position="43"/>
    </location>
</feature>
<feature type="modified residue" description="4-carboxyglutamate" evidence="1 3">
    <location>
        <position position="47"/>
    </location>
</feature>
<feature type="modified residue" description="4-carboxyglutamate" evidence="1 3">
    <location>
        <position position="50"/>
    </location>
</feature>
<feature type="modified residue" description="4-carboxyglutamate" evidence="1 3">
    <location>
        <position position="51"/>
    </location>
</feature>
<feature type="disulfide bond" evidence="1">
    <location>
        <begin position="49"/>
        <end position="55"/>
    </location>
</feature>